<name>AACP2_BRADU</name>
<comment type="function">
    <text evidence="2">Aminoacyl carrier protein. Can be charged with L-glycine via the formation of a thioester bond between the amino acid and the 4'-phosphopantetheinyl prosthetic group, catalyzed by the bll6282 ligase.</text>
</comment>
<comment type="PTM">
    <text>4'-phosphopantetheine is transferred from CoA to a specific serine of the apo-form of this carrier protein.</text>
</comment>
<comment type="sequence caution" evidence="3">
    <conflict type="erroneous initiation">
        <sequence resource="EMBL-CDS" id="BAC51549"/>
    </conflict>
    <text>Extended N-terminus.</text>
</comment>
<dbReference type="EMBL" id="BA000040">
    <property type="protein sequence ID" value="BAC51549.1"/>
    <property type="status" value="ALT_INIT"/>
    <property type="molecule type" value="Genomic_DNA"/>
</dbReference>
<dbReference type="RefSeq" id="NP_772924.1">
    <property type="nucleotide sequence ID" value="NC_004463.1"/>
</dbReference>
<dbReference type="RefSeq" id="WP_038966761.1">
    <property type="nucleotide sequence ID" value="NC_004463.1"/>
</dbReference>
<dbReference type="SMR" id="Q89GR1"/>
<dbReference type="STRING" id="224911.AAV28_28985"/>
<dbReference type="EnsemblBacteria" id="BAC51549">
    <property type="protein sequence ID" value="BAC51549"/>
    <property type="gene ID" value="BAC51549"/>
</dbReference>
<dbReference type="GeneID" id="46493271"/>
<dbReference type="KEGG" id="bja:blr6284"/>
<dbReference type="PATRIC" id="fig|224911.44.peg.6263"/>
<dbReference type="eggNOG" id="COG0236">
    <property type="taxonomic scope" value="Bacteria"/>
</dbReference>
<dbReference type="HOGENOM" id="CLU_2435073_0_0_5"/>
<dbReference type="InParanoid" id="Q89GR1"/>
<dbReference type="OrthoDB" id="8250336at2"/>
<dbReference type="Proteomes" id="UP000002526">
    <property type="component" value="Chromosome"/>
</dbReference>
<dbReference type="GO" id="GO:0005829">
    <property type="term" value="C:cytosol"/>
    <property type="evidence" value="ECO:0000318"/>
    <property type="project" value="GO_Central"/>
</dbReference>
<dbReference type="GO" id="GO:0016020">
    <property type="term" value="C:membrane"/>
    <property type="evidence" value="ECO:0007669"/>
    <property type="project" value="GOC"/>
</dbReference>
<dbReference type="GO" id="GO:0000035">
    <property type="term" value="F:acyl binding"/>
    <property type="evidence" value="ECO:0000318"/>
    <property type="project" value="GO_Central"/>
</dbReference>
<dbReference type="GO" id="GO:0000036">
    <property type="term" value="F:acyl carrier activity"/>
    <property type="evidence" value="ECO:0000318"/>
    <property type="project" value="GO_Central"/>
</dbReference>
<dbReference type="GO" id="GO:0009245">
    <property type="term" value="P:lipid A biosynthetic process"/>
    <property type="evidence" value="ECO:0000318"/>
    <property type="project" value="GO_Central"/>
</dbReference>
<dbReference type="Gene3D" id="1.10.1200.10">
    <property type="entry name" value="ACP-like"/>
    <property type="match status" value="1"/>
</dbReference>
<dbReference type="InterPro" id="IPR036736">
    <property type="entry name" value="ACP-like_sf"/>
</dbReference>
<dbReference type="InterPro" id="IPR009081">
    <property type="entry name" value="PP-bd_ACP"/>
</dbReference>
<dbReference type="Pfam" id="PF00550">
    <property type="entry name" value="PP-binding"/>
    <property type="match status" value="1"/>
</dbReference>
<dbReference type="SUPFAM" id="SSF47336">
    <property type="entry name" value="ACP-like"/>
    <property type="match status" value="1"/>
</dbReference>
<dbReference type="PROSITE" id="PS50075">
    <property type="entry name" value="CARRIER"/>
    <property type="match status" value="1"/>
</dbReference>
<proteinExistence type="evidence at protein level"/>
<sequence length="89" mass="9852">MHNTAINVQNRVLSVVRSVLQQNAISADVHPESRLVDIGLSSMGMVELMLKVEAEFDLILPQFEITPENFRSVKAMERMILNQLGSGSG</sequence>
<reference key="1">
    <citation type="journal article" date="2002" name="DNA Res.">
        <title>Complete genomic sequence of nitrogen-fixing symbiotic bacterium Bradyrhizobium japonicum USDA110.</title>
        <authorList>
            <person name="Kaneko T."/>
            <person name="Nakamura Y."/>
            <person name="Sato S."/>
            <person name="Minamisawa K."/>
            <person name="Uchiumi T."/>
            <person name="Sasamoto S."/>
            <person name="Watanabe A."/>
            <person name="Idesawa K."/>
            <person name="Iriguchi M."/>
            <person name="Kawashima K."/>
            <person name="Kohara M."/>
            <person name="Matsumoto M."/>
            <person name="Shimpo S."/>
            <person name="Tsuruoka H."/>
            <person name="Wada T."/>
            <person name="Yamada M."/>
            <person name="Tabata S."/>
        </authorList>
    </citation>
    <scope>NUCLEOTIDE SEQUENCE [LARGE SCALE GENOMIC DNA]</scope>
    <source>
        <strain>JCM 10833 / BCRC 13528 / IAM 13628 / NBRC 14792 / USDA 110</strain>
    </source>
</reference>
<reference key="2">
    <citation type="journal article" date="2010" name="Proc. Natl. Acad. Sci. U.S.A.">
        <title>Homologs of aminoacyl-tRNA synthetases acylate carrier proteins and provide a link between ribosomal and nonribosomal peptide synthesis.</title>
        <authorList>
            <person name="Mocibob M."/>
            <person name="Ivic N."/>
            <person name="Bilokapic S."/>
            <person name="Maier T."/>
            <person name="Luic M."/>
            <person name="Ban N."/>
            <person name="Weygand-Durasevic I."/>
        </authorList>
    </citation>
    <scope>FUNCTION AS A CARRIER PROTEIN</scope>
    <scope>PHOSPHOPANTETHEINYLATION</scope>
    <scope>PTM</scope>
    <scope>IDENTIFICATION BY MASS SPECTROMETRY</scope>
    <source>
        <strain>JCM 10833 / BCRC 13528 / IAM 13628 / NBRC 14792 / USDA 110</strain>
    </source>
</reference>
<accession>Q89GR1</accession>
<evidence type="ECO:0000255" key="1">
    <source>
        <dbReference type="PROSITE-ProRule" id="PRU00258"/>
    </source>
</evidence>
<evidence type="ECO:0000269" key="2">
    <source>
    </source>
</evidence>
<evidence type="ECO:0000305" key="3"/>
<keyword id="KW-0596">Phosphopantetheine</keyword>
<keyword id="KW-0597">Phosphoprotein</keyword>
<keyword id="KW-1185">Reference proteome</keyword>
<feature type="chain" id="PRO_0000401190" description="Aminoacyl carrier protein 2">
    <location>
        <begin position="1"/>
        <end position="89"/>
    </location>
</feature>
<feature type="domain" description="Carrier" evidence="1">
    <location>
        <begin position="6"/>
        <end position="84"/>
    </location>
</feature>
<feature type="modified residue" description="O-(pantetheine 4'-phosphoryl)serine" evidence="1">
    <location>
        <position position="42"/>
    </location>
</feature>
<protein>
    <recommendedName>
        <fullName>Aminoacyl carrier protein 2</fullName>
    </recommendedName>
</protein>
<organism>
    <name type="scientific">Bradyrhizobium diazoefficiens (strain JCM 10833 / BCRC 13528 / IAM 13628 / NBRC 14792 / USDA 110)</name>
    <dbReference type="NCBI Taxonomy" id="224911"/>
    <lineage>
        <taxon>Bacteria</taxon>
        <taxon>Pseudomonadati</taxon>
        <taxon>Pseudomonadota</taxon>
        <taxon>Alphaproteobacteria</taxon>
        <taxon>Hyphomicrobiales</taxon>
        <taxon>Nitrobacteraceae</taxon>
        <taxon>Bradyrhizobium</taxon>
    </lineage>
</organism>
<gene>
    <name type="ordered locus">blr6284</name>
</gene>